<protein>
    <recommendedName>
        <fullName evidence="1">Probable GTP-binding protein EngB</fullName>
    </recommendedName>
</protein>
<dbReference type="EMBL" id="AL513382">
    <property type="protein sequence ID" value="CAD03099.1"/>
    <property type="molecule type" value="Genomic_DNA"/>
</dbReference>
<dbReference type="EMBL" id="AE014613">
    <property type="protein sequence ID" value="AAO71121.1"/>
    <property type="molecule type" value="Genomic_DNA"/>
</dbReference>
<dbReference type="RefSeq" id="NP_458048.1">
    <property type="nucleotide sequence ID" value="NC_003198.1"/>
</dbReference>
<dbReference type="SMR" id="P64069"/>
<dbReference type="STRING" id="220341.gene:17587736"/>
<dbReference type="KEGG" id="stt:t3620"/>
<dbReference type="KEGG" id="sty:STY3880"/>
<dbReference type="PATRIC" id="fig|220341.7.peg.3959"/>
<dbReference type="eggNOG" id="COG0218">
    <property type="taxonomic scope" value="Bacteria"/>
</dbReference>
<dbReference type="HOGENOM" id="CLU_033732_1_0_6"/>
<dbReference type="OMA" id="AKVDQCP"/>
<dbReference type="OrthoDB" id="9804921at2"/>
<dbReference type="Proteomes" id="UP000000541">
    <property type="component" value="Chromosome"/>
</dbReference>
<dbReference type="Proteomes" id="UP000002670">
    <property type="component" value="Chromosome"/>
</dbReference>
<dbReference type="GO" id="GO:0005829">
    <property type="term" value="C:cytosol"/>
    <property type="evidence" value="ECO:0007669"/>
    <property type="project" value="TreeGrafter"/>
</dbReference>
<dbReference type="GO" id="GO:0005525">
    <property type="term" value="F:GTP binding"/>
    <property type="evidence" value="ECO:0007669"/>
    <property type="project" value="UniProtKB-UniRule"/>
</dbReference>
<dbReference type="GO" id="GO:0046872">
    <property type="term" value="F:metal ion binding"/>
    <property type="evidence" value="ECO:0007669"/>
    <property type="project" value="UniProtKB-KW"/>
</dbReference>
<dbReference type="GO" id="GO:0000917">
    <property type="term" value="P:division septum assembly"/>
    <property type="evidence" value="ECO:0007669"/>
    <property type="project" value="UniProtKB-KW"/>
</dbReference>
<dbReference type="CDD" id="cd01876">
    <property type="entry name" value="YihA_EngB"/>
    <property type="match status" value="1"/>
</dbReference>
<dbReference type="FunFam" id="3.40.50.300:FF:000098">
    <property type="entry name" value="Probable GTP-binding protein EngB"/>
    <property type="match status" value="1"/>
</dbReference>
<dbReference type="Gene3D" id="3.40.50.300">
    <property type="entry name" value="P-loop containing nucleotide triphosphate hydrolases"/>
    <property type="match status" value="1"/>
</dbReference>
<dbReference type="HAMAP" id="MF_00321">
    <property type="entry name" value="GTPase_EngB"/>
    <property type="match status" value="1"/>
</dbReference>
<dbReference type="InterPro" id="IPR030393">
    <property type="entry name" value="G_ENGB_dom"/>
</dbReference>
<dbReference type="InterPro" id="IPR006073">
    <property type="entry name" value="GTP-bd"/>
</dbReference>
<dbReference type="InterPro" id="IPR019987">
    <property type="entry name" value="GTP-bd_ribosome_bio_YsxC"/>
</dbReference>
<dbReference type="InterPro" id="IPR027417">
    <property type="entry name" value="P-loop_NTPase"/>
</dbReference>
<dbReference type="NCBIfam" id="TIGR03598">
    <property type="entry name" value="GTPase_YsxC"/>
    <property type="match status" value="1"/>
</dbReference>
<dbReference type="PANTHER" id="PTHR11649:SF13">
    <property type="entry name" value="ENGB-TYPE G DOMAIN-CONTAINING PROTEIN"/>
    <property type="match status" value="1"/>
</dbReference>
<dbReference type="PANTHER" id="PTHR11649">
    <property type="entry name" value="MSS1/TRME-RELATED GTP-BINDING PROTEIN"/>
    <property type="match status" value="1"/>
</dbReference>
<dbReference type="Pfam" id="PF01926">
    <property type="entry name" value="MMR_HSR1"/>
    <property type="match status" value="1"/>
</dbReference>
<dbReference type="SUPFAM" id="SSF52540">
    <property type="entry name" value="P-loop containing nucleoside triphosphate hydrolases"/>
    <property type="match status" value="1"/>
</dbReference>
<dbReference type="PROSITE" id="PS51706">
    <property type="entry name" value="G_ENGB"/>
    <property type="match status" value="1"/>
</dbReference>
<reference key="1">
    <citation type="journal article" date="2001" name="Nature">
        <title>Complete genome sequence of a multiple drug resistant Salmonella enterica serovar Typhi CT18.</title>
        <authorList>
            <person name="Parkhill J."/>
            <person name="Dougan G."/>
            <person name="James K.D."/>
            <person name="Thomson N.R."/>
            <person name="Pickard D."/>
            <person name="Wain J."/>
            <person name="Churcher C.M."/>
            <person name="Mungall K.L."/>
            <person name="Bentley S.D."/>
            <person name="Holden M.T.G."/>
            <person name="Sebaihia M."/>
            <person name="Baker S."/>
            <person name="Basham D."/>
            <person name="Brooks K."/>
            <person name="Chillingworth T."/>
            <person name="Connerton P."/>
            <person name="Cronin A."/>
            <person name="Davis P."/>
            <person name="Davies R.M."/>
            <person name="Dowd L."/>
            <person name="White N."/>
            <person name="Farrar J."/>
            <person name="Feltwell T."/>
            <person name="Hamlin N."/>
            <person name="Haque A."/>
            <person name="Hien T.T."/>
            <person name="Holroyd S."/>
            <person name="Jagels K."/>
            <person name="Krogh A."/>
            <person name="Larsen T.S."/>
            <person name="Leather S."/>
            <person name="Moule S."/>
            <person name="O'Gaora P."/>
            <person name="Parry C."/>
            <person name="Quail M.A."/>
            <person name="Rutherford K.M."/>
            <person name="Simmonds M."/>
            <person name="Skelton J."/>
            <person name="Stevens K."/>
            <person name="Whitehead S."/>
            <person name="Barrell B.G."/>
        </authorList>
    </citation>
    <scope>NUCLEOTIDE SEQUENCE [LARGE SCALE GENOMIC DNA]</scope>
    <source>
        <strain>CT18</strain>
    </source>
</reference>
<reference key="2">
    <citation type="journal article" date="2003" name="J. Bacteriol.">
        <title>Comparative genomics of Salmonella enterica serovar Typhi strains Ty2 and CT18.</title>
        <authorList>
            <person name="Deng W."/>
            <person name="Liou S.-R."/>
            <person name="Plunkett G. III"/>
            <person name="Mayhew G.F."/>
            <person name="Rose D.J."/>
            <person name="Burland V."/>
            <person name="Kodoyianni V."/>
            <person name="Schwartz D.C."/>
            <person name="Blattner F.R."/>
        </authorList>
    </citation>
    <scope>NUCLEOTIDE SEQUENCE [LARGE SCALE GENOMIC DNA]</scope>
    <source>
        <strain>ATCC 700931 / Ty2</strain>
    </source>
</reference>
<evidence type="ECO:0000255" key="1">
    <source>
        <dbReference type="HAMAP-Rule" id="MF_00321"/>
    </source>
</evidence>
<organism>
    <name type="scientific">Salmonella typhi</name>
    <dbReference type="NCBI Taxonomy" id="90370"/>
    <lineage>
        <taxon>Bacteria</taxon>
        <taxon>Pseudomonadati</taxon>
        <taxon>Pseudomonadota</taxon>
        <taxon>Gammaproteobacteria</taxon>
        <taxon>Enterobacterales</taxon>
        <taxon>Enterobacteriaceae</taxon>
        <taxon>Salmonella</taxon>
    </lineage>
</organism>
<sequence>MTNLNYQQTHFVMSAPDIRHLPSDCGIEVAFAGRSNAGKSSALNTLTNQKSLARTSKTPGRTQLINLFEVVDGKRLVDLPGYGYAEVPEEMKRKWQRALGEYLEKRQSLQGLVVLMDIRHPLKDLDQQMIQWAVESNIQVLVLLTKADKLASGARKAQLNMVREAVLAFNGDVQVEAFSSLKKQGVDKLRQKLDSWFSELAPVEEIQDGE</sequence>
<keyword id="KW-0131">Cell cycle</keyword>
<keyword id="KW-0132">Cell division</keyword>
<keyword id="KW-0342">GTP-binding</keyword>
<keyword id="KW-0460">Magnesium</keyword>
<keyword id="KW-0479">Metal-binding</keyword>
<keyword id="KW-0547">Nucleotide-binding</keyword>
<keyword id="KW-0717">Septation</keyword>
<name>ENGB_SALTI</name>
<proteinExistence type="inferred from homology"/>
<comment type="function">
    <text evidence="1">Necessary for normal cell division and for the maintenance of normal septation.</text>
</comment>
<comment type="cofactor">
    <cofactor evidence="1">
        <name>Mg(2+)</name>
        <dbReference type="ChEBI" id="CHEBI:18420"/>
    </cofactor>
</comment>
<comment type="similarity">
    <text evidence="1">Belongs to the TRAFAC class TrmE-Era-EngA-EngB-Septin-like GTPase superfamily. EngB GTPase family.</text>
</comment>
<feature type="chain" id="PRO_0000157779" description="Probable GTP-binding protein EngB">
    <location>
        <begin position="1"/>
        <end position="210"/>
    </location>
</feature>
<feature type="domain" description="EngB-type G" evidence="1">
    <location>
        <begin position="25"/>
        <end position="199"/>
    </location>
</feature>
<feature type="binding site" evidence="1">
    <location>
        <begin position="33"/>
        <end position="40"/>
    </location>
    <ligand>
        <name>GTP</name>
        <dbReference type="ChEBI" id="CHEBI:37565"/>
    </ligand>
</feature>
<feature type="binding site" evidence="1">
    <location>
        <position position="40"/>
    </location>
    <ligand>
        <name>Mg(2+)</name>
        <dbReference type="ChEBI" id="CHEBI:18420"/>
    </ligand>
</feature>
<feature type="binding site" evidence="1">
    <location>
        <begin position="60"/>
        <end position="64"/>
    </location>
    <ligand>
        <name>GTP</name>
        <dbReference type="ChEBI" id="CHEBI:37565"/>
    </ligand>
</feature>
<feature type="binding site" evidence="1">
    <location>
        <position position="62"/>
    </location>
    <ligand>
        <name>Mg(2+)</name>
        <dbReference type="ChEBI" id="CHEBI:18420"/>
    </ligand>
</feature>
<feature type="binding site" evidence="1">
    <location>
        <begin position="78"/>
        <end position="81"/>
    </location>
    <ligand>
        <name>GTP</name>
        <dbReference type="ChEBI" id="CHEBI:37565"/>
    </ligand>
</feature>
<feature type="binding site" evidence="1">
    <location>
        <begin position="145"/>
        <end position="148"/>
    </location>
    <ligand>
        <name>GTP</name>
        <dbReference type="ChEBI" id="CHEBI:37565"/>
    </ligand>
</feature>
<feature type="binding site" evidence="1">
    <location>
        <begin position="178"/>
        <end position="180"/>
    </location>
    <ligand>
        <name>GTP</name>
        <dbReference type="ChEBI" id="CHEBI:37565"/>
    </ligand>
</feature>
<accession>P64069</accession>
<accession>Q8XFI8</accession>
<gene>
    <name evidence="1" type="primary">engB</name>
    <name type="ordered locus">STY3880</name>
    <name type="ordered locus">t3620</name>
</gene>